<proteinExistence type="evidence at transcript level"/>
<name>SRS1B_DANRE</name>
<reference key="1">
    <citation type="submission" date="2005-05" db="EMBL/GenBank/DDBJ databases">
        <authorList>
            <consortium name="NIH - Zebrafish Gene Collection (ZGC) project"/>
        </authorList>
    </citation>
    <scope>NUCLEOTIDE SEQUENCE [LARGE SCALE MRNA]</scope>
    <source>
        <tissue>Embryo</tissue>
        <tissue>Olfactory epithelium</tissue>
    </source>
</reference>
<reference key="2">
    <citation type="journal article" date="2013" name="Nature">
        <title>The zebrafish reference genome sequence and its relationship to the human genome.</title>
        <authorList>
            <person name="Howe K."/>
            <person name="Clark M.D."/>
            <person name="Torroja C.F."/>
            <person name="Torrance J."/>
            <person name="Berthelot C."/>
            <person name="Muffato M."/>
            <person name="Collins J.E."/>
            <person name="Humphray S."/>
            <person name="McLaren K."/>
            <person name="Matthews L."/>
            <person name="McLaren S."/>
            <person name="Sealy I."/>
            <person name="Caccamo M."/>
            <person name="Churcher C."/>
            <person name="Scott C."/>
            <person name="Barrett J.C."/>
            <person name="Koch R."/>
            <person name="Rauch G.J."/>
            <person name="White S."/>
            <person name="Chow W."/>
            <person name="Kilian B."/>
            <person name="Quintais L.T."/>
            <person name="Guerra-Assuncao J.A."/>
            <person name="Zhou Y."/>
            <person name="Gu Y."/>
            <person name="Yen J."/>
            <person name="Vogel J.H."/>
            <person name="Eyre T."/>
            <person name="Redmond S."/>
            <person name="Banerjee R."/>
            <person name="Chi J."/>
            <person name="Fu B."/>
            <person name="Langley E."/>
            <person name="Maguire S.F."/>
            <person name="Laird G.K."/>
            <person name="Lloyd D."/>
            <person name="Kenyon E."/>
            <person name="Donaldson S."/>
            <person name="Sehra H."/>
            <person name="Almeida-King J."/>
            <person name="Loveland J."/>
            <person name="Trevanion S."/>
            <person name="Jones M."/>
            <person name="Quail M."/>
            <person name="Willey D."/>
            <person name="Hunt A."/>
            <person name="Burton J."/>
            <person name="Sims S."/>
            <person name="McLay K."/>
            <person name="Plumb B."/>
            <person name="Davis J."/>
            <person name="Clee C."/>
            <person name="Oliver K."/>
            <person name="Clark R."/>
            <person name="Riddle C."/>
            <person name="Elliot D."/>
            <person name="Threadgold G."/>
            <person name="Harden G."/>
            <person name="Ware D."/>
            <person name="Begum S."/>
            <person name="Mortimore B."/>
            <person name="Kerry G."/>
            <person name="Heath P."/>
            <person name="Phillimore B."/>
            <person name="Tracey A."/>
            <person name="Corby N."/>
            <person name="Dunn M."/>
            <person name="Johnson C."/>
            <person name="Wood J."/>
            <person name="Clark S."/>
            <person name="Pelan S."/>
            <person name="Griffiths G."/>
            <person name="Smith M."/>
            <person name="Glithero R."/>
            <person name="Howden P."/>
            <person name="Barker N."/>
            <person name="Lloyd C."/>
            <person name="Stevens C."/>
            <person name="Harley J."/>
            <person name="Holt K."/>
            <person name="Panagiotidis G."/>
            <person name="Lovell J."/>
            <person name="Beasley H."/>
            <person name="Henderson C."/>
            <person name="Gordon D."/>
            <person name="Auger K."/>
            <person name="Wright D."/>
            <person name="Collins J."/>
            <person name="Raisen C."/>
            <person name="Dyer L."/>
            <person name="Leung K."/>
            <person name="Robertson L."/>
            <person name="Ambridge K."/>
            <person name="Leongamornlert D."/>
            <person name="McGuire S."/>
            <person name="Gilderthorp R."/>
            <person name="Griffiths C."/>
            <person name="Manthravadi D."/>
            <person name="Nichol S."/>
            <person name="Barker G."/>
            <person name="Whitehead S."/>
            <person name="Kay M."/>
            <person name="Brown J."/>
            <person name="Murnane C."/>
            <person name="Gray E."/>
            <person name="Humphries M."/>
            <person name="Sycamore N."/>
            <person name="Barker D."/>
            <person name="Saunders D."/>
            <person name="Wallis J."/>
            <person name="Babbage A."/>
            <person name="Hammond S."/>
            <person name="Mashreghi-Mohammadi M."/>
            <person name="Barr L."/>
            <person name="Martin S."/>
            <person name="Wray P."/>
            <person name="Ellington A."/>
            <person name="Matthews N."/>
            <person name="Ellwood M."/>
            <person name="Woodmansey R."/>
            <person name="Clark G."/>
            <person name="Cooper J."/>
            <person name="Tromans A."/>
            <person name="Grafham D."/>
            <person name="Skuce C."/>
            <person name="Pandian R."/>
            <person name="Andrews R."/>
            <person name="Harrison E."/>
            <person name="Kimberley A."/>
            <person name="Garnett J."/>
            <person name="Fosker N."/>
            <person name="Hall R."/>
            <person name="Garner P."/>
            <person name="Kelly D."/>
            <person name="Bird C."/>
            <person name="Palmer S."/>
            <person name="Gehring I."/>
            <person name="Berger A."/>
            <person name="Dooley C.M."/>
            <person name="Ersan-Urun Z."/>
            <person name="Eser C."/>
            <person name="Geiger H."/>
            <person name="Geisler M."/>
            <person name="Karotki L."/>
            <person name="Kirn A."/>
            <person name="Konantz J."/>
            <person name="Konantz M."/>
            <person name="Oberlander M."/>
            <person name="Rudolph-Geiger S."/>
            <person name="Teucke M."/>
            <person name="Lanz C."/>
            <person name="Raddatz G."/>
            <person name="Osoegawa K."/>
            <person name="Zhu B."/>
            <person name="Rapp A."/>
            <person name="Widaa S."/>
            <person name="Langford C."/>
            <person name="Yang F."/>
            <person name="Schuster S.C."/>
            <person name="Carter N.P."/>
            <person name="Harrow J."/>
            <person name="Ning Z."/>
            <person name="Herrero J."/>
            <person name="Searle S.M."/>
            <person name="Enright A."/>
            <person name="Geisler R."/>
            <person name="Plasterk R.H."/>
            <person name="Lee C."/>
            <person name="Westerfield M."/>
            <person name="de Jong P.J."/>
            <person name="Zon L.I."/>
            <person name="Postlethwait J.H."/>
            <person name="Nusslein-Volhard C."/>
            <person name="Hubbard T.J."/>
            <person name="Roest Crollius H."/>
            <person name="Rogers J."/>
            <person name="Stemple D.L."/>
        </authorList>
    </citation>
    <scope>NUCLEOTIDE SEQUENCE [LARGE SCALE GENOMIC DNA] OF 64-245</scope>
    <source>
        <strain>Tuebingen</strain>
    </source>
</reference>
<sequence>MSGGVIRGPAGNNDCRIYVGNLPPDIRTKDVEDVFYKYGAIRDIDLKNRRGGPPFAFVEFEDPRDAEDAVYGRDGYDYDGYRLRVEFPRSGRGGGRGGGGGGGVGAPRGRYGPPSRRSEYRVIVSGLPPSGSWQDLKDHMREAGDVCYADVFRDGTGVVEFVRKEDMTYAVRKLDNTKFRSHEGETAYIRVKVDGPRSPSYGRSRSRSRSRSRSRSNSRSRSYSPRRSRGSPRYSPRHSRSRSRT</sequence>
<comment type="function">
    <text evidence="1">May play a role in preventing exon skipping, ensuring the accuracy of splicing and regulating alternative splicing.</text>
</comment>
<comment type="subcellular location">
    <subcellularLocation>
        <location evidence="2">Cytoplasm</location>
    </subcellularLocation>
    <subcellularLocation>
        <location evidence="2">Nucleus speckle</location>
    </subcellularLocation>
    <text evidence="2">In nuclear speckles. Shuttles between the nucleus and the cytoplasm.</text>
</comment>
<comment type="similarity">
    <text evidence="5">Belongs to the splicing factor SR family.</text>
</comment>
<comment type="sequence caution" evidence="5">
    <conflict type="miscellaneous discrepancy">
        <sequence resource="EMBL-CDS" id="AAH56752"/>
    </conflict>
    <text>Intron retention.</text>
</comment>
<organism>
    <name type="scientific">Danio rerio</name>
    <name type="common">Zebrafish</name>
    <name type="synonym">Brachydanio rerio</name>
    <dbReference type="NCBI Taxonomy" id="7955"/>
    <lineage>
        <taxon>Eukaryota</taxon>
        <taxon>Metazoa</taxon>
        <taxon>Chordata</taxon>
        <taxon>Craniata</taxon>
        <taxon>Vertebrata</taxon>
        <taxon>Euteleostomi</taxon>
        <taxon>Actinopterygii</taxon>
        <taxon>Neopterygii</taxon>
        <taxon>Teleostei</taxon>
        <taxon>Ostariophysi</taxon>
        <taxon>Cypriniformes</taxon>
        <taxon>Danionidae</taxon>
        <taxon>Danioninae</taxon>
        <taxon>Danio</taxon>
    </lineage>
</organism>
<evidence type="ECO:0000250" key="1"/>
<evidence type="ECO:0000250" key="2">
    <source>
        <dbReference type="UniProtKB" id="Q07955"/>
    </source>
</evidence>
<evidence type="ECO:0000255" key="3">
    <source>
        <dbReference type="PROSITE-ProRule" id="PRU00176"/>
    </source>
</evidence>
<evidence type="ECO:0000256" key="4">
    <source>
        <dbReference type="SAM" id="MobiDB-lite"/>
    </source>
</evidence>
<evidence type="ECO:0000305" key="5"/>
<protein>
    <recommendedName>
        <fullName>Serine/arginine-rich splicing factor 1B</fullName>
    </recommendedName>
    <alternativeName>
        <fullName>Splicing factor, arginine/serine-rich 1</fullName>
    </alternativeName>
    <alternativeName>
        <fullName>Splicing factor, arginine/serine-rich 1B</fullName>
    </alternativeName>
</protein>
<dbReference type="EMBL" id="BC056752">
    <property type="protein sequence ID" value="AAH56752.1"/>
    <property type="status" value="ALT_SEQ"/>
    <property type="molecule type" value="mRNA"/>
</dbReference>
<dbReference type="EMBL" id="BC066682">
    <property type="protein sequence ID" value="AAH66682.1"/>
    <property type="molecule type" value="mRNA"/>
</dbReference>
<dbReference type="EMBL" id="BC095586">
    <property type="protein sequence ID" value="AAH95586.1"/>
    <property type="molecule type" value="mRNA"/>
</dbReference>
<dbReference type="EMBL" id="AL929224">
    <property type="status" value="NOT_ANNOTATED_CDS"/>
    <property type="molecule type" value="Genomic_DNA"/>
</dbReference>
<dbReference type="RefSeq" id="NP_956887.2">
    <property type="nucleotide sequence ID" value="NM_200593.2"/>
</dbReference>
<dbReference type="SMR" id="Q6NYA0"/>
<dbReference type="FunCoup" id="Q6NYA0">
    <property type="interactions" value="2803"/>
</dbReference>
<dbReference type="STRING" id="7955.ENSDARP00000116886"/>
<dbReference type="PaxDb" id="7955-ENSDARP00000102203"/>
<dbReference type="Ensembl" id="ENSDART00000143566">
    <property type="protein sequence ID" value="ENSDARP00000116886"/>
    <property type="gene ID" value="ENSDARG00000017843"/>
</dbReference>
<dbReference type="GeneID" id="393565"/>
<dbReference type="KEGG" id="dre:393565"/>
<dbReference type="AGR" id="ZFIN:ZDB-GENE-040426-1467"/>
<dbReference type="CTD" id="393565"/>
<dbReference type="ZFIN" id="ZDB-GENE-040426-1467">
    <property type="gene designation" value="srsf1b"/>
</dbReference>
<dbReference type="eggNOG" id="KOG0105">
    <property type="taxonomic scope" value="Eukaryota"/>
</dbReference>
<dbReference type="HOGENOM" id="CLU_012062_34_0_1"/>
<dbReference type="InParanoid" id="Q6NYA0"/>
<dbReference type="OMA" id="PREPAYP"/>
<dbReference type="OrthoDB" id="1099063at2759"/>
<dbReference type="PhylomeDB" id="Q6NYA0"/>
<dbReference type="Reactome" id="R-DRE-72163">
    <property type="pathway name" value="mRNA Splicing - Major Pathway"/>
</dbReference>
<dbReference type="PRO" id="PR:Q6NYA0"/>
<dbReference type="Proteomes" id="UP000000437">
    <property type="component" value="Chromosome 21"/>
</dbReference>
<dbReference type="Bgee" id="ENSDARG00000017843">
    <property type="expression patterns" value="Expressed in testis and 26 other cell types or tissues"/>
</dbReference>
<dbReference type="GO" id="GO:0005737">
    <property type="term" value="C:cytoplasm"/>
    <property type="evidence" value="ECO:0007669"/>
    <property type="project" value="UniProtKB-SubCell"/>
</dbReference>
<dbReference type="GO" id="GO:0016607">
    <property type="term" value="C:nuclear speck"/>
    <property type="evidence" value="ECO:0000318"/>
    <property type="project" value="GO_Central"/>
</dbReference>
<dbReference type="GO" id="GO:0003729">
    <property type="term" value="F:mRNA binding"/>
    <property type="evidence" value="ECO:0000318"/>
    <property type="project" value="GO_Central"/>
</dbReference>
<dbReference type="GO" id="GO:0000380">
    <property type="term" value="P:alternative mRNA splicing, via spliceosome"/>
    <property type="evidence" value="ECO:0000318"/>
    <property type="project" value="GO_Central"/>
</dbReference>
<dbReference type="CDD" id="cd12597">
    <property type="entry name" value="RRM1_SRSF1"/>
    <property type="match status" value="1"/>
</dbReference>
<dbReference type="CDD" id="cd12767">
    <property type="entry name" value="RRM2_SRSF1"/>
    <property type="match status" value="1"/>
</dbReference>
<dbReference type="FunFam" id="3.30.70.330:FF:000053">
    <property type="entry name" value="Serine/arginine-rich splicing factor 1"/>
    <property type="match status" value="1"/>
</dbReference>
<dbReference type="FunFam" id="3.30.70.330:FF:000170">
    <property type="entry name" value="Serine/arginine-rich splicing factor 1"/>
    <property type="match status" value="1"/>
</dbReference>
<dbReference type="Gene3D" id="3.30.70.330">
    <property type="match status" value="2"/>
</dbReference>
<dbReference type="InterPro" id="IPR012677">
    <property type="entry name" value="Nucleotide-bd_a/b_plait_sf"/>
</dbReference>
<dbReference type="InterPro" id="IPR035979">
    <property type="entry name" value="RBD_domain_sf"/>
</dbReference>
<dbReference type="InterPro" id="IPR000504">
    <property type="entry name" value="RRM_dom"/>
</dbReference>
<dbReference type="InterPro" id="IPR050374">
    <property type="entry name" value="RRT5_SRSF_SR"/>
</dbReference>
<dbReference type="InterPro" id="IPR034520">
    <property type="entry name" value="SRSF1_RRM1"/>
</dbReference>
<dbReference type="InterPro" id="IPR029538">
    <property type="entry name" value="SRSF1_RRM2"/>
</dbReference>
<dbReference type="PANTHER" id="PTHR23003">
    <property type="entry name" value="RNA RECOGNITION MOTIF RRM DOMAIN CONTAINING PROTEIN"/>
    <property type="match status" value="1"/>
</dbReference>
<dbReference type="PANTHER" id="PTHR23003:SF66">
    <property type="entry name" value="SERINE_ARGININE-RICH SPLICING FACTOR 1"/>
    <property type="match status" value="1"/>
</dbReference>
<dbReference type="Pfam" id="PF00076">
    <property type="entry name" value="RRM_1"/>
    <property type="match status" value="2"/>
</dbReference>
<dbReference type="SMART" id="SM00360">
    <property type="entry name" value="RRM"/>
    <property type="match status" value="2"/>
</dbReference>
<dbReference type="SUPFAM" id="SSF54928">
    <property type="entry name" value="RNA-binding domain, RBD"/>
    <property type="match status" value="1"/>
</dbReference>
<dbReference type="PROSITE" id="PS50102">
    <property type="entry name" value="RRM"/>
    <property type="match status" value="2"/>
</dbReference>
<gene>
    <name type="primary">srsf1b</name>
    <name type="synonym">sfrs1</name>
    <name type="synonym">sfrs1b</name>
    <name type="ORF">zgc:111894</name>
    <name type="ORF">zgc:65898</name>
    <name type="ORF">zgc:76897</name>
</gene>
<feature type="chain" id="PRO_0000081914" description="Serine/arginine-rich splicing factor 1B">
    <location>
        <begin position="1"/>
        <end position="245"/>
    </location>
</feature>
<feature type="domain" description="RRM 1" evidence="3">
    <location>
        <begin position="15"/>
        <end position="90"/>
    </location>
</feature>
<feature type="domain" description="RRM 2" evidence="3">
    <location>
        <begin position="120"/>
        <end position="194"/>
    </location>
</feature>
<feature type="region of interest" description="Disordered" evidence="4">
    <location>
        <begin position="89"/>
        <end position="116"/>
    </location>
</feature>
<feature type="region of interest" description="Disordered" evidence="4">
    <location>
        <begin position="192"/>
        <end position="245"/>
    </location>
</feature>
<feature type="compositionally biased region" description="Gly residues" evidence="4">
    <location>
        <begin position="91"/>
        <end position="106"/>
    </location>
</feature>
<feature type="compositionally biased region" description="Basic residues" evidence="4">
    <location>
        <begin position="204"/>
        <end position="245"/>
    </location>
</feature>
<feature type="sequence conflict" description="In Ref. 1; AAH95586." evidence="5" ref="1">
    <original>P</original>
    <variation>Q</variation>
    <location>
        <position position="53"/>
    </location>
</feature>
<feature type="sequence conflict" description="In Ref. 1; AAH95586." evidence="5" ref="1">
    <original>S</original>
    <variation>G</variation>
    <location>
        <position position="216"/>
    </location>
</feature>
<feature type="sequence conflict" description="In Ref. 1; AAH95586." evidence="5" ref="1">
    <original>RT</original>
    <variation>PVCFLSSLVCWVFMI</variation>
    <location>
        <begin position="244"/>
        <end position="245"/>
    </location>
</feature>
<accession>Q6NYA0</accession>
<accession>Q502R8</accession>
<accession>Q6PH14</accession>
<keyword id="KW-0963">Cytoplasm</keyword>
<keyword id="KW-0507">mRNA processing</keyword>
<keyword id="KW-0508">mRNA splicing</keyword>
<keyword id="KW-0539">Nucleus</keyword>
<keyword id="KW-1185">Reference proteome</keyword>
<keyword id="KW-0677">Repeat</keyword>
<keyword id="KW-0694">RNA-binding</keyword>